<gene>
    <name evidence="1" type="primary">hisH</name>
    <name type="ordered locus">BALH_1263</name>
</gene>
<dbReference type="EC" id="4.3.2.10" evidence="1"/>
<dbReference type="EC" id="3.5.1.2" evidence="1"/>
<dbReference type="EMBL" id="CP000485">
    <property type="protein sequence ID" value="ABK84613.1"/>
    <property type="molecule type" value="Genomic_DNA"/>
</dbReference>
<dbReference type="RefSeq" id="WP_000560342.1">
    <property type="nucleotide sequence ID" value="NC_008600.1"/>
</dbReference>
<dbReference type="SMR" id="A0RBM0"/>
<dbReference type="KEGG" id="btl:BALH_1263"/>
<dbReference type="HOGENOM" id="CLU_071837_2_2_9"/>
<dbReference type="UniPathway" id="UPA00031">
    <property type="reaction ID" value="UER00010"/>
</dbReference>
<dbReference type="GO" id="GO:0005737">
    <property type="term" value="C:cytoplasm"/>
    <property type="evidence" value="ECO:0007669"/>
    <property type="project" value="UniProtKB-SubCell"/>
</dbReference>
<dbReference type="GO" id="GO:0004359">
    <property type="term" value="F:glutaminase activity"/>
    <property type="evidence" value="ECO:0007669"/>
    <property type="project" value="UniProtKB-EC"/>
</dbReference>
<dbReference type="GO" id="GO:0000107">
    <property type="term" value="F:imidazoleglycerol-phosphate synthase activity"/>
    <property type="evidence" value="ECO:0007669"/>
    <property type="project" value="UniProtKB-UniRule"/>
</dbReference>
<dbReference type="GO" id="GO:0016829">
    <property type="term" value="F:lyase activity"/>
    <property type="evidence" value="ECO:0007669"/>
    <property type="project" value="UniProtKB-KW"/>
</dbReference>
<dbReference type="GO" id="GO:0000105">
    <property type="term" value="P:L-histidine biosynthetic process"/>
    <property type="evidence" value="ECO:0007669"/>
    <property type="project" value="UniProtKB-UniRule"/>
</dbReference>
<dbReference type="CDD" id="cd01748">
    <property type="entry name" value="GATase1_IGP_Synthase"/>
    <property type="match status" value="1"/>
</dbReference>
<dbReference type="FunFam" id="3.40.50.880:FF:000028">
    <property type="entry name" value="Imidazole glycerol phosphate synthase subunit HisH"/>
    <property type="match status" value="1"/>
</dbReference>
<dbReference type="Gene3D" id="3.40.50.880">
    <property type="match status" value="1"/>
</dbReference>
<dbReference type="HAMAP" id="MF_00278">
    <property type="entry name" value="HisH"/>
    <property type="match status" value="1"/>
</dbReference>
<dbReference type="InterPro" id="IPR029062">
    <property type="entry name" value="Class_I_gatase-like"/>
</dbReference>
<dbReference type="InterPro" id="IPR017926">
    <property type="entry name" value="GATASE"/>
</dbReference>
<dbReference type="InterPro" id="IPR010139">
    <property type="entry name" value="Imidazole-glycPsynth_HisH"/>
</dbReference>
<dbReference type="NCBIfam" id="TIGR01855">
    <property type="entry name" value="IMP_synth_hisH"/>
    <property type="match status" value="1"/>
</dbReference>
<dbReference type="PANTHER" id="PTHR42701">
    <property type="entry name" value="IMIDAZOLE GLYCEROL PHOSPHATE SYNTHASE SUBUNIT HISH"/>
    <property type="match status" value="1"/>
</dbReference>
<dbReference type="PANTHER" id="PTHR42701:SF1">
    <property type="entry name" value="IMIDAZOLE GLYCEROL PHOSPHATE SYNTHASE SUBUNIT HISH"/>
    <property type="match status" value="1"/>
</dbReference>
<dbReference type="Pfam" id="PF00117">
    <property type="entry name" value="GATase"/>
    <property type="match status" value="1"/>
</dbReference>
<dbReference type="PIRSF" id="PIRSF000495">
    <property type="entry name" value="Amidotransf_hisH"/>
    <property type="match status" value="1"/>
</dbReference>
<dbReference type="SUPFAM" id="SSF52317">
    <property type="entry name" value="Class I glutamine amidotransferase-like"/>
    <property type="match status" value="1"/>
</dbReference>
<dbReference type="PROSITE" id="PS51273">
    <property type="entry name" value="GATASE_TYPE_1"/>
    <property type="match status" value="1"/>
</dbReference>
<comment type="function">
    <text evidence="1">IGPS catalyzes the conversion of PRFAR and glutamine to IGP, AICAR and glutamate. The HisH subunit catalyzes the hydrolysis of glutamine to glutamate and ammonia as part of the synthesis of IGP and AICAR. The resulting ammonia molecule is channeled to the active site of HisF.</text>
</comment>
<comment type="catalytic activity">
    <reaction evidence="1">
        <text>5-[(5-phospho-1-deoxy-D-ribulos-1-ylimino)methylamino]-1-(5-phospho-beta-D-ribosyl)imidazole-4-carboxamide + L-glutamine = D-erythro-1-(imidazol-4-yl)glycerol 3-phosphate + 5-amino-1-(5-phospho-beta-D-ribosyl)imidazole-4-carboxamide + L-glutamate + H(+)</text>
        <dbReference type="Rhea" id="RHEA:24793"/>
        <dbReference type="ChEBI" id="CHEBI:15378"/>
        <dbReference type="ChEBI" id="CHEBI:29985"/>
        <dbReference type="ChEBI" id="CHEBI:58278"/>
        <dbReference type="ChEBI" id="CHEBI:58359"/>
        <dbReference type="ChEBI" id="CHEBI:58475"/>
        <dbReference type="ChEBI" id="CHEBI:58525"/>
        <dbReference type="EC" id="4.3.2.10"/>
    </reaction>
</comment>
<comment type="catalytic activity">
    <reaction evidence="1">
        <text>L-glutamine + H2O = L-glutamate + NH4(+)</text>
        <dbReference type="Rhea" id="RHEA:15889"/>
        <dbReference type="ChEBI" id="CHEBI:15377"/>
        <dbReference type="ChEBI" id="CHEBI:28938"/>
        <dbReference type="ChEBI" id="CHEBI:29985"/>
        <dbReference type="ChEBI" id="CHEBI:58359"/>
        <dbReference type="EC" id="3.5.1.2"/>
    </reaction>
</comment>
<comment type="pathway">
    <text evidence="1">Amino-acid biosynthesis; L-histidine biosynthesis; L-histidine from 5-phospho-alpha-D-ribose 1-diphosphate: step 5/9.</text>
</comment>
<comment type="subunit">
    <text evidence="1">Heterodimer of HisH and HisF.</text>
</comment>
<comment type="subcellular location">
    <subcellularLocation>
        <location evidence="1">Cytoplasm</location>
    </subcellularLocation>
</comment>
<evidence type="ECO:0000255" key="1">
    <source>
        <dbReference type="HAMAP-Rule" id="MF_00278"/>
    </source>
</evidence>
<reference key="1">
    <citation type="journal article" date="2007" name="J. Bacteriol.">
        <title>The complete genome sequence of Bacillus thuringiensis Al Hakam.</title>
        <authorList>
            <person name="Challacombe J.F."/>
            <person name="Altherr M.R."/>
            <person name="Xie G."/>
            <person name="Bhotika S.S."/>
            <person name="Brown N."/>
            <person name="Bruce D."/>
            <person name="Campbell C.S."/>
            <person name="Campbell M.L."/>
            <person name="Chen J."/>
            <person name="Chertkov O."/>
            <person name="Cleland C."/>
            <person name="Dimitrijevic M."/>
            <person name="Doggett N.A."/>
            <person name="Fawcett J.J."/>
            <person name="Glavina T."/>
            <person name="Goodwin L.A."/>
            <person name="Green L.D."/>
            <person name="Han C.S."/>
            <person name="Hill K.K."/>
            <person name="Hitchcock P."/>
            <person name="Jackson P.J."/>
            <person name="Keim P."/>
            <person name="Kewalramani A.R."/>
            <person name="Longmire J."/>
            <person name="Lucas S."/>
            <person name="Malfatti S."/>
            <person name="Martinez D."/>
            <person name="McMurry K."/>
            <person name="Meincke L.J."/>
            <person name="Misra M."/>
            <person name="Moseman B.L."/>
            <person name="Mundt M."/>
            <person name="Munk A.C."/>
            <person name="Okinaka R.T."/>
            <person name="Parson-Quintana B."/>
            <person name="Reilly L.P."/>
            <person name="Richardson P."/>
            <person name="Robinson D.L."/>
            <person name="Saunders E."/>
            <person name="Tapia R."/>
            <person name="Tesmer J.G."/>
            <person name="Thayer N."/>
            <person name="Thompson L.S."/>
            <person name="Tice H."/>
            <person name="Ticknor L.O."/>
            <person name="Wills P.L."/>
            <person name="Gilna P."/>
            <person name="Brettin T.S."/>
        </authorList>
    </citation>
    <scope>NUCLEOTIDE SEQUENCE [LARGE SCALE GENOMIC DNA]</scope>
    <source>
        <strain>Al Hakam</strain>
    </source>
</reference>
<sequence>MIAIIDYGMGNIRSVEQALKYIGAAYIVTSDKEEIFRSDGVILPGVGAFPKAMDILEEKDLVRVLQEIGRSRKPLLGICLGMQLLFEKSEELQDCNGLSLLPGVIRKLKVPYKIPHMGWNELKKEGEIALWNGVEDGSFVYYVHSYYADCPNEIVYGISDYGVKVPGFVAKGNIYGAQFHPEKSGDIGMQILKNFKGVVETWKSSQLSI</sequence>
<feature type="chain" id="PRO_1000114773" description="Imidazole glycerol phosphate synthase subunit HisH">
    <location>
        <begin position="1"/>
        <end position="209"/>
    </location>
</feature>
<feature type="domain" description="Glutamine amidotransferase type-1" evidence="1">
    <location>
        <begin position="1"/>
        <end position="205"/>
    </location>
</feature>
<feature type="active site" description="Nucleophile" evidence="1">
    <location>
        <position position="79"/>
    </location>
</feature>
<feature type="active site" evidence="1">
    <location>
        <position position="180"/>
    </location>
</feature>
<feature type="active site" evidence="1">
    <location>
        <position position="182"/>
    </location>
</feature>
<organism>
    <name type="scientific">Bacillus thuringiensis (strain Al Hakam)</name>
    <dbReference type="NCBI Taxonomy" id="412694"/>
    <lineage>
        <taxon>Bacteria</taxon>
        <taxon>Bacillati</taxon>
        <taxon>Bacillota</taxon>
        <taxon>Bacilli</taxon>
        <taxon>Bacillales</taxon>
        <taxon>Bacillaceae</taxon>
        <taxon>Bacillus</taxon>
        <taxon>Bacillus cereus group</taxon>
    </lineage>
</organism>
<keyword id="KW-0028">Amino-acid biosynthesis</keyword>
<keyword id="KW-0963">Cytoplasm</keyword>
<keyword id="KW-0315">Glutamine amidotransferase</keyword>
<keyword id="KW-0368">Histidine biosynthesis</keyword>
<keyword id="KW-0378">Hydrolase</keyword>
<keyword id="KW-0456">Lyase</keyword>
<accession>A0RBM0</accession>
<proteinExistence type="inferred from homology"/>
<protein>
    <recommendedName>
        <fullName evidence="1">Imidazole glycerol phosphate synthase subunit HisH</fullName>
        <ecNumber evidence="1">4.3.2.10</ecNumber>
    </recommendedName>
    <alternativeName>
        <fullName evidence="1">IGP synthase glutaminase subunit</fullName>
        <ecNumber evidence="1">3.5.1.2</ecNumber>
    </alternativeName>
    <alternativeName>
        <fullName evidence="1">IGP synthase subunit HisH</fullName>
    </alternativeName>
    <alternativeName>
        <fullName evidence="1">ImGP synthase subunit HisH</fullName>
        <shortName evidence="1">IGPS subunit HisH</shortName>
    </alternativeName>
</protein>
<name>HIS5_BACAH</name>